<comment type="function">
    <text>This enzyme is an effector of chloramphenicol resistance in bacteria.</text>
</comment>
<comment type="catalytic activity">
    <reaction evidence="1">
        <text>chloramphenicol + acetyl-CoA = chloramphenicol 3-acetate + CoA</text>
        <dbReference type="Rhea" id="RHEA:18421"/>
        <dbReference type="ChEBI" id="CHEBI:16730"/>
        <dbReference type="ChEBI" id="CHEBI:17698"/>
        <dbReference type="ChEBI" id="CHEBI:57287"/>
        <dbReference type="ChEBI" id="CHEBI:57288"/>
        <dbReference type="EC" id="2.3.1.28"/>
    </reaction>
</comment>
<comment type="subunit">
    <text>Homotrimer.</text>
</comment>
<comment type="similarity">
    <text evidence="2">Belongs to the chloramphenicol acetyltransferase family.</text>
</comment>
<protein>
    <recommendedName>
        <fullName>Chloramphenicol acetyltransferase 3</fullName>
        <ecNumber>2.3.1.28</ecNumber>
    </recommendedName>
    <alternativeName>
        <fullName>Chloramphenicol acetyltransferase III</fullName>
        <shortName>CAT-III</shortName>
    </alternativeName>
</protein>
<proteinExistence type="evidence at protein level"/>
<sequence>MNYTKFDVKNWVRREHFEFYRHRLPCGFSLTSKIDITTLKKSLDDSAYKFYPVMIYLIAQAVNQFDELRMAIKDDELIVWDSVDPQFTVFHQETETFSALSCPYSSDIDQFMVNYLSVMERYKSDTKLFPQGVTPENHLNISALPWVNFDSFNLNVANFTDYFAPIITMAKYQQEGDRLLLPLSVQVHHAVCDGFHVARFINRLQELCNSKLK</sequence>
<reference key="1">
    <citation type="journal article" date="1988" name="Biochem. J.">
        <title>Nucleotide sequence analysis and overexpression of the gene encoding a type III chloramphenicol acetyltransferase.</title>
        <authorList>
            <person name="Murray I.A."/>
            <person name="Hawkins A.R."/>
            <person name="Keyte J.W."/>
            <person name="Shaw W.V."/>
        </authorList>
    </citation>
    <scope>NUCLEOTIDE SEQUENCE [GENOMIC DNA]</scope>
    <scope>PARTIAL PROTEIN SEQUENCE</scope>
</reference>
<reference key="2">
    <citation type="journal article" date="1988" name="Proc. Natl. Acad. Sci. U.S.A.">
        <title>Structure of chloramphenicol acetyltransferase at 1.75-A resolution.</title>
        <authorList>
            <person name="Leslie A.G.W."/>
            <person name="Moody P.C.E."/>
            <person name="Shaw W.V."/>
        </authorList>
    </citation>
    <scope>X-RAY CRYSTALLOGRAPHY (1.75 ANGSTROMS)</scope>
</reference>
<reference key="3">
    <citation type="journal article" date="1990" name="J. Mol. Biol.">
        <title>Refined crystal structure of type III chloramphenicol acetyltransferase at 1.75-A resolution.</title>
        <authorList>
            <person name="Leslie A.G.W."/>
        </authorList>
    </citation>
    <scope>X-RAY CRYSTALLOGRAPHY (1.75 ANGSTROMS)</scope>
</reference>
<feature type="chain" id="PRO_0000165877" description="Chloramphenicol acetyltransferase 3">
    <location>
        <begin position="1"/>
        <end position="213"/>
    </location>
</feature>
<feature type="active site" description="Proton acceptor">
    <location>
        <position position="189"/>
    </location>
</feature>
<feature type="strand" evidence="3">
    <location>
        <begin position="3"/>
        <end position="5"/>
    </location>
</feature>
<feature type="helix" evidence="3">
    <location>
        <begin position="8"/>
        <end position="10"/>
    </location>
</feature>
<feature type="helix" evidence="3">
    <location>
        <begin position="14"/>
        <end position="22"/>
    </location>
</feature>
<feature type="strand" evidence="3">
    <location>
        <begin position="26"/>
        <end position="35"/>
    </location>
</feature>
<feature type="helix" evidence="3">
    <location>
        <begin position="37"/>
        <end position="44"/>
    </location>
</feature>
<feature type="helix" evidence="3">
    <location>
        <begin position="50"/>
        <end position="62"/>
    </location>
</feature>
<feature type="helix" evidence="3">
    <location>
        <begin position="66"/>
        <end position="68"/>
    </location>
</feature>
<feature type="strand" evidence="3">
    <location>
        <begin position="69"/>
        <end position="73"/>
    </location>
</feature>
<feature type="strand" evidence="3">
    <location>
        <begin position="76"/>
        <end position="82"/>
    </location>
</feature>
<feature type="strand" evidence="3">
    <location>
        <begin position="84"/>
        <end position="91"/>
    </location>
</feature>
<feature type="turn" evidence="3">
    <location>
        <begin position="92"/>
        <end position="95"/>
    </location>
</feature>
<feature type="strand" evidence="3">
    <location>
        <begin position="96"/>
        <end position="101"/>
    </location>
</feature>
<feature type="helix" evidence="3">
    <location>
        <begin position="108"/>
        <end position="122"/>
    </location>
</feature>
<feature type="strand" evidence="3">
    <location>
        <begin position="127"/>
        <end position="129"/>
    </location>
</feature>
<feature type="strand" evidence="3">
    <location>
        <begin position="136"/>
        <end position="144"/>
    </location>
</feature>
<feature type="strand" evidence="3">
    <location>
        <begin position="150"/>
        <end position="157"/>
    </location>
</feature>
<feature type="strand" evidence="3">
    <location>
        <begin position="166"/>
        <end position="170"/>
    </location>
</feature>
<feature type="strand" evidence="3">
    <location>
        <begin position="173"/>
        <end position="175"/>
    </location>
</feature>
<feature type="strand" evidence="3">
    <location>
        <begin position="178"/>
        <end position="188"/>
    </location>
</feature>
<feature type="turn" evidence="3">
    <location>
        <begin position="189"/>
        <end position="191"/>
    </location>
</feature>
<feature type="helix" evidence="3">
    <location>
        <begin position="194"/>
        <end position="208"/>
    </location>
</feature>
<keyword id="KW-0002">3D-structure</keyword>
<keyword id="KW-0012">Acyltransferase</keyword>
<keyword id="KW-0046">Antibiotic resistance</keyword>
<keyword id="KW-0903">Direct protein sequencing</keyword>
<keyword id="KW-0614">Plasmid</keyword>
<keyword id="KW-0808">Transferase</keyword>
<organism>
    <name type="scientific">Escherichia coli</name>
    <dbReference type="NCBI Taxonomy" id="562"/>
    <lineage>
        <taxon>Bacteria</taxon>
        <taxon>Pseudomonadati</taxon>
        <taxon>Pseudomonadota</taxon>
        <taxon>Gammaproteobacteria</taxon>
        <taxon>Enterobacterales</taxon>
        <taxon>Enterobacteriaceae</taxon>
        <taxon>Escherichia</taxon>
    </lineage>
</organism>
<geneLocation type="plasmid">
    <name>IncK R387</name>
</geneLocation>
<accession>P00484</accession>
<dbReference type="EC" id="2.3.1.28"/>
<dbReference type="EMBL" id="X07848">
    <property type="protein sequence ID" value="CAA30695.1"/>
    <property type="molecule type" value="Genomic_DNA"/>
</dbReference>
<dbReference type="PIR" id="A00567">
    <property type="entry name" value="XXECC3"/>
</dbReference>
<dbReference type="PDB" id="1CIA">
    <property type="method" value="X-ray"/>
    <property type="resolution" value="2.50 A"/>
    <property type="chains" value="A=1-213"/>
</dbReference>
<dbReference type="PDB" id="1CLA">
    <property type="method" value="X-ray"/>
    <property type="resolution" value="2.34 A"/>
    <property type="chains" value="A=1-213"/>
</dbReference>
<dbReference type="PDB" id="1QCA">
    <property type="method" value="X-ray"/>
    <property type="resolution" value="2.20 A"/>
    <property type="chains" value="A=1-213"/>
</dbReference>
<dbReference type="PDB" id="2CLA">
    <property type="method" value="X-ray"/>
    <property type="resolution" value="2.35 A"/>
    <property type="chains" value="A=1-213"/>
</dbReference>
<dbReference type="PDB" id="3CLA">
    <property type="method" value="X-ray"/>
    <property type="resolution" value="1.75 A"/>
    <property type="chains" value="A=1-213"/>
</dbReference>
<dbReference type="PDB" id="4CLA">
    <property type="method" value="X-ray"/>
    <property type="resolution" value="2.00 A"/>
    <property type="chains" value="A=1-213"/>
</dbReference>
<dbReference type="PDB" id="6X7Q">
    <property type="method" value="X-ray"/>
    <property type="resolution" value="1.68 A"/>
    <property type="chains" value="A/B/C=1-213"/>
</dbReference>
<dbReference type="PDBsum" id="1CIA"/>
<dbReference type="PDBsum" id="1CLA"/>
<dbReference type="PDBsum" id="1QCA"/>
<dbReference type="PDBsum" id="2CLA"/>
<dbReference type="PDBsum" id="3CLA"/>
<dbReference type="PDBsum" id="4CLA"/>
<dbReference type="PDBsum" id="6X7Q"/>
<dbReference type="SMR" id="P00484"/>
<dbReference type="DrugBank" id="DB00446">
    <property type="generic name" value="Chloramphenicol"/>
</dbReference>
<dbReference type="DrugBank" id="DB07565">
    <property type="generic name" value="Chloramphenicol succinate"/>
</dbReference>
<dbReference type="DrugBank" id="DB02703">
    <property type="generic name" value="Fusidic acid"/>
</dbReference>
<dbReference type="CARD" id="ARO:3002685">
    <property type="molecule name" value="catIII"/>
    <property type="mechanism identifier" value="ARO:0001004"/>
    <property type="mechanism name" value="antibiotic inactivation"/>
</dbReference>
<dbReference type="KEGG" id="ag:CAA30695"/>
<dbReference type="EvolutionaryTrace" id="P00484"/>
<dbReference type="GO" id="GO:0008811">
    <property type="term" value="F:chloramphenicol O-acetyltransferase activity"/>
    <property type="evidence" value="ECO:0007669"/>
    <property type="project" value="UniProtKB-EC"/>
</dbReference>
<dbReference type="GO" id="GO:0046677">
    <property type="term" value="P:response to antibiotic"/>
    <property type="evidence" value="ECO:0007669"/>
    <property type="project" value="UniProtKB-KW"/>
</dbReference>
<dbReference type="Gene3D" id="3.30.559.10">
    <property type="entry name" value="Chloramphenicol acetyltransferase-like domain"/>
    <property type="match status" value="1"/>
</dbReference>
<dbReference type="InterPro" id="IPR023213">
    <property type="entry name" value="CAT-like_dom_sf"/>
</dbReference>
<dbReference type="InterPro" id="IPR018372">
    <property type="entry name" value="Chloramphenicol_AcTrfase_AS"/>
</dbReference>
<dbReference type="InterPro" id="IPR001707">
    <property type="entry name" value="Cmp_AcTrfase"/>
</dbReference>
<dbReference type="NCBIfam" id="NF000491">
    <property type="entry name" value="chloram_CatA"/>
    <property type="match status" value="1"/>
</dbReference>
<dbReference type="PANTHER" id="PTHR38474:SF2">
    <property type="entry name" value="CHLORAMPHENICOL ACETYLTRANSFERASE"/>
    <property type="match status" value="1"/>
</dbReference>
<dbReference type="PANTHER" id="PTHR38474">
    <property type="entry name" value="SLR0299 PROTEIN"/>
    <property type="match status" value="1"/>
</dbReference>
<dbReference type="Pfam" id="PF00302">
    <property type="entry name" value="CAT"/>
    <property type="match status" value="1"/>
</dbReference>
<dbReference type="PIRSF" id="PIRSF000440">
    <property type="entry name" value="CAT"/>
    <property type="match status" value="1"/>
</dbReference>
<dbReference type="SMART" id="SM01059">
    <property type="entry name" value="CAT"/>
    <property type="match status" value="1"/>
</dbReference>
<dbReference type="SUPFAM" id="SSF52777">
    <property type="entry name" value="CoA-dependent acyltransferases"/>
    <property type="match status" value="1"/>
</dbReference>
<dbReference type="PROSITE" id="PS00100">
    <property type="entry name" value="CAT"/>
    <property type="match status" value="1"/>
</dbReference>
<gene>
    <name type="primary">cat3</name>
</gene>
<name>CAT3_ECOLX</name>
<evidence type="ECO:0000255" key="1">
    <source>
        <dbReference type="PROSITE-ProRule" id="PRU10021"/>
    </source>
</evidence>
<evidence type="ECO:0000305" key="2"/>
<evidence type="ECO:0007829" key="3">
    <source>
        <dbReference type="PDB" id="6X7Q"/>
    </source>
</evidence>